<protein>
    <recommendedName>
        <fullName evidence="1">Oxygen-dependent choline dehydrogenase</fullName>
        <shortName evidence="1">CDH</shortName>
        <shortName evidence="1">CHD</shortName>
        <ecNumber evidence="1">1.1.99.1</ecNumber>
    </recommendedName>
    <alternativeName>
        <fullName evidence="1">Betaine aldehyde dehydrogenase</fullName>
        <shortName evidence="1">BADH</shortName>
        <ecNumber evidence="1">1.2.1.8</ecNumber>
    </alternativeName>
</protein>
<comment type="function">
    <text evidence="1">Involved in the biosynthesis of the osmoprotectant glycine betaine. Catalyzes the oxidation of choline to betaine aldehyde and betaine aldehyde to glycine betaine at the same rate.</text>
</comment>
<comment type="catalytic activity">
    <reaction evidence="1">
        <text>choline + A = betaine aldehyde + AH2</text>
        <dbReference type="Rhea" id="RHEA:17433"/>
        <dbReference type="ChEBI" id="CHEBI:13193"/>
        <dbReference type="ChEBI" id="CHEBI:15354"/>
        <dbReference type="ChEBI" id="CHEBI:15710"/>
        <dbReference type="ChEBI" id="CHEBI:17499"/>
        <dbReference type="EC" id="1.1.99.1"/>
    </reaction>
</comment>
<comment type="catalytic activity">
    <reaction evidence="1">
        <text>betaine aldehyde + NAD(+) + H2O = glycine betaine + NADH + 2 H(+)</text>
        <dbReference type="Rhea" id="RHEA:15305"/>
        <dbReference type="ChEBI" id="CHEBI:15377"/>
        <dbReference type="ChEBI" id="CHEBI:15378"/>
        <dbReference type="ChEBI" id="CHEBI:15710"/>
        <dbReference type="ChEBI" id="CHEBI:17750"/>
        <dbReference type="ChEBI" id="CHEBI:57540"/>
        <dbReference type="ChEBI" id="CHEBI:57945"/>
        <dbReference type="EC" id="1.2.1.8"/>
    </reaction>
</comment>
<comment type="cofactor">
    <cofactor evidence="1">
        <name>FAD</name>
        <dbReference type="ChEBI" id="CHEBI:57692"/>
    </cofactor>
</comment>
<comment type="pathway">
    <text evidence="1">Amine and polyamine biosynthesis; betaine biosynthesis via choline pathway; betaine aldehyde from choline (cytochrome c reductase route): step 1/1.</text>
</comment>
<comment type="similarity">
    <text evidence="1">Belongs to the GMC oxidoreductase family.</text>
</comment>
<dbReference type="EC" id="1.1.99.1" evidence="1"/>
<dbReference type="EC" id="1.2.1.8" evidence="1"/>
<dbReference type="EMBL" id="CP000459">
    <property type="protein sequence ID" value="ABK11833.1"/>
    <property type="molecule type" value="Genomic_DNA"/>
</dbReference>
<dbReference type="RefSeq" id="WP_011547081.1">
    <property type="nucleotide sequence ID" value="NC_008543.1"/>
</dbReference>
<dbReference type="SMR" id="A0B2F7"/>
<dbReference type="KEGG" id="bch:Bcen2424_5100"/>
<dbReference type="HOGENOM" id="CLU_002865_7_1_4"/>
<dbReference type="UniPathway" id="UPA00529">
    <property type="reaction ID" value="UER00385"/>
</dbReference>
<dbReference type="GO" id="GO:0016020">
    <property type="term" value="C:membrane"/>
    <property type="evidence" value="ECO:0007669"/>
    <property type="project" value="TreeGrafter"/>
</dbReference>
<dbReference type="GO" id="GO:0008802">
    <property type="term" value="F:betaine-aldehyde dehydrogenase (NAD+) activity"/>
    <property type="evidence" value="ECO:0007669"/>
    <property type="project" value="UniProtKB-EC"/>
</dbReference>
<dbReference type="GO" id="GO:0008812">
    <property type="term" value="F:choline dehydrogenase activity"/>
    <property type="evidence" value="ECO:0007669"/>
    <property type="project" value="UniProtKB-UniRule"/>
</dbReference>
<dbReference type="GO" id="GO:0050660">
    <property type="term" value="F:flavin adenine dinucleotide binding"/>
    <property type="evidence" value="ECO:0007669"/>
    <property type="project" value="InterPro"/>
</dbReference>
<dbReference type="GO" id="GO:0019285">
    <property type="term" value="P:glycine betaine biosynthetic process from choline"/>
    <property type="evidence" value="ECO:0007669"/>
    <property type="project" value="UniProtKB-UniRule"/>
</dbReference>
<dbReference type="Gene3D" id="3.50.50.60">
    <property type="entry name" value="FAD/NAD(P)-binding domain"/>
    <property type="match status" value="1"/>
</dbReference>
<dbReference type="Gene3D" id="3.30.560.10">
    <property type="entry name" value="Glucose Oxidase, domain 3"/>
    <property type="match status" value="1"/>
</dbReference>
<dbReference type="HAMAP" id="MF_00750">
    <property type="entry name" value="Choline_dehydrogen"/>
    <property type="match status" value="1"/>
</dbReference>
<dbReference type="InterPro" id="IPR011533">
    <property type="entry name" value="BetA"/>
</dbReference>
<dbReference type="InterPro" id="IPR036188">
    <property type="entry name" value="FAD/NAD-bd_sf"/>
</dbReference>
<dbReference type="InterPro" id="IPR012132">
    <property type="entry name" value="GMC_OxRdtase"/>
</dbReference>
<dbReference type="InterPro" id="IPR000172">
    <property type="entry name" value="GMC_OxRdtase_N"/>
</dbReference>
<dbReference type="InterPro" id="IPR007867">
    <property type="entry name" value="GMC_OxRtase_C"/>
</dbReference>
<dbReference type="NCBIfam" id="TIGR01810">
    <property type="entry name" value="betA"/>
    <property type="match status" value="1"/>
</dbReference>
<dbReference type="NCBIfam" id="NF002550">
    <property type="entry name" value="PRK02106.1"/>
    <property type="match status" value="1"/>
</dbReference>
<dbReference type="PANTHER" id="PTHR11552:SF147">
    <property type="entry name" value="CHOLINE DEHYDROGENASE, MITOCHONDRIAL"/>
    <property type="match status" value="1"/>
</dbReference>
<dbReference type="PANTHER" id="PTHR11552">
    <property type="entry name" value="GLUCOSE-METHANOL-CHOLINE GMC OXIDOREDUCTASE"/>
    <property type="match status" value="1"/>
</dbReference>
<dbReference type="Pfam" id="PF05199">
    <property type="entry name" value="GMC_oxred_C"/>
    <property type="match status" value="1"/>
</dbReference>
<dbReference type="Pfam" id="PF00732">
    <property type="entry name" value="GMC_oxred_N"/>
    <property type="match status" value="1"/>
</dbReference>
<dbReference type="PIRSF" id="PIRSF000137">
    <property type="entry name" value="Alcohol_oxidase"/>
    <property type="match status" value="1"/>
</dbReference>
<dbReference type="SUPFAM" id="SSF54373">
    <property type="entry name" value="FAD-linked reductases, C-terminal domain"/>
    <property type="match status" value="1"/>
</dbReference>
<dbReference type="SUPFAM" id="SSF51905">
    <property type="entry name" value="FAD/NAD(P)-binding domain"/>
    <property type="match status" value="1"/>
</dbReference>
<dbReference type="PROSITE" id="PS00623">
    <property type="entry name" value="GMC_OXRED_1"/>
    <property type="match status" value="1"/>
</dbReference>
<dbReference type="PROSITE" id="PS00624">
    <property type="entry name" value="GMC_OXRED_2"/>
    <property type="match status" value="1"/>
</dbReference>
<name>BETA_BURCH</name>
<proteinExistence type="inferred from homology"/>
<organism>
    <name type="scientific">Burkholderia cenocepacia (strain HI2424)</name>
    <dbReference type="NCBI Taxonomy" id="331272"/>
    <lineage>
        <taxon>Bacteria</taxon>
        <taxon>Pseudomonadati</taxon>
        <taxon>Pseudomonadota</taxon>
        <taxon>Betaproteobacteria</taxon>
        <taxon>Burkholderiales</taxon>
        <taxon>Burkholderiaceae</taxon>
        <taxon>Burkholderia</taxon>
        <taxon>Burkholderia cepacia complex</taxon>
    </lineage>
</organism>
<reference key="1">
    <citation type="submission" date="2006-08" db="EMBL/GenBank/DDBJ databases">
        <title>Complete sequence of chromosome 2 of Burkholderia cenocepacia HI2424.</title>
        <authorList>
            <person name="Copeland A."/>
            <person name="Lucas S."/>
            <person name="Lapidus A."/>
            <person name="Barry K."/>
            <person name="Detter J.C."/>
            <person name="Glavina del Rio T."/>
            <person name="Hammon N."/>
            <person name="Israni S."/>
            <person name="Pitluck S."/>
            <person name="Chain P."/>
            <person name="Malfatti S."/>
            <person name="Shin M."/>
            <person name="Vergez L."/>
            <person name="Schmutz J."/>
            <person name="Larimer F."/>
            <person name="Land M."/>
            <person name="Hauser L."/>
            <person name="Kyrpides N."/>
            <person name="Kim E."/>
            <person name="LiPuma J.J."/>
            <person name="Gonzalez C.F."/>
            <person name="Konstantinidis K."/>
            <person name="Tiedje J.M."/>
            <person name="Richardson P."/>
        </authorList>
    </citation>
    <scope>NUCLEOTIDE SEQUENCE [LARGE SCALE GENOMIC DNA]</scope>
    <source>
        <strain>HI2424</strain>
    </source>
</reference>
<keyword id="KW-0274">FAD</keyword>
<keyword id="KW-0285">Flavoprotein</keyword>
<keyword id="KW-0520">NAD</keyword>
<keyword id="KW-0560">Oxidoreductase</keyword>
<evidence type="ECO:0000255" key="1">
    <source>
        <dbReference type="HAMAP-Rule" id="MF_00750"/>
    </source>
</evidence>
<evidence type="ECO:0000256" key="2">
    <source>
        <dbReference type="SAM" id="MobiDB-lite"/>
    </source>
</evidence>
<gene>
    <name evidence="1" type="primary">betA</name>
    <name type="ordered locus">Bcen2424_5100</name>
</gene>
<sequence>MTTREYDYIICGAGSAGNVLATRLTEDPDVTVLLLEAGGPDYRFDFRTQMPAALAYPLQGRRYNWAYETDPEPHMDNRRMECGRGKGLGGSSLINGMCYIRGNALDYDNWSTHKGLENWTYLDCLPYFKKAETRDVGPNDYHGGSGPVSVTTSKPGVNPLFEAMVDAGVQAGYPRTDDLNGYQQEGFGPMDRTVTPKGRRASTARGYLDQAKVRPNLEIVTHALADRILFDGKRASGVTYLRGSERATAHARREVLVCSGAIASPQLLQRSGVGPGAWLKELDIPVVLDLPGVGQNLQDHLEMYIQYECKEPVSLYPALKWWNQPKIGLEWMLNGTGLGASNHFEAGGFIRTRDDDPWPNIQYHFLPVAINYNGSNAIEMHGFQAHVGSMRSPSRGRVKLRSRDPNDHPSILFNYMAEALDWREFRDAIRATREIMRQPALDRYRGRELNPGADCKSDKELDAFVRARAETAFHPSCSCKMGYDDMAVVDEEGRVHGLDGLRVVDASIMPIITTGNLNAPTIMIAEKIADKIRGRTPLARVDVPYFVANGAPARNVAKAVRQPETV</sequence>
<feature type="chain" id="PRO_1000046559" description="Oxygen-dependent choline dehydrogenase">
    <location>
        <begin position="1"/>
        <end position="566"/>
    </location>
</feature>
<feature type="region of interest" description="Disordered" evidence="2">
    <location>
        <begin position="180"/>
        <end position="202"/>
    </location>
</feature>
<feature type="active site" description="Proton acceptor" evidence="1">
    <location>
        <position position="474"/>
    </location>
</feature>
<feature type="binding site" evidence="1">
    <location>
        <begin position="7"/>
        <end position="36"/>
    </location>
    <ligand>
        <name>FAD</name>
        <dbReference type="ChEBI" id="CHEBI:57692"/>
    </ligand>
</feature>
<accession>A0B2F7</accession>